<dbReference type="EMBL" id="AP006716">
    <property type="protein sequence ID" value="BAE04964.1"/>
    <property type="molecule type" value="Genomic_DNA"/>
</dbReference>
<dbReference type="RefSeq" id="WP_011275941.1">
    <property type="nucleotide sequence ID" value="NC_007168.1"/>
</dbReference>
<dbReference type="SMR" id="Q4L5W1"/>
<dbReference type="GeneID" id="93781033"/>
<dbReference type="KEGG" id="sha:SH1655"/>
<dbReference type="eggNOG" id="COG0233">
    <property type="taxonomic scope" value="Bacteria"/>
</dbReference>
<dbReference type="HOGENOM" id="CLU_073981_2_0_9"/>
<dbReference type="OrthoDB" id="9804006at2"/>
<dbReference type="Proteomes" id="UP000000543">
    <property type="component" value="Chromosome"/>
</dbReference>
<dbReference type="GO" id="GO:0005737">
    <property type="term" value="C:cytoplasm"/>
    <property type="evidence" value="ECO:0007669"/>
    <property type="project" value="UniProtKB-SubCell"/>
</dbReference>
<dbReference type="GO" id="GO:0043023">
    <property type="term" value="F:ribosomal large subunit binding"/>
    <property type="evidence" value="ECO:0007669"/>
    <property type="project" value="TreeGrafter"/>
</dbReference>
<dbReference type="GO" id="GO:0006415">
    <property type="term" value="P:translational termination"/>
    <property type="evidence" value="ECO:0007669"/>
    <property type="project" value="UniProtKB-UniRule"/>
</dbReference>
<dbReference type="CDD" id="cd00520">
    <property type="entry name" value="RRF"/>
    <property type="match status" value="1"/>
</dbReference>
<dbReference type="FunFam" id="1.10.132.20:FF:000001">
    <property type="entry name" value="Ribosome-recycling factor"/>
    <property type="match status" value="1"/>
</dbReference>
<dbReference type="FunFam" id="3.30.1360.40:FF:000001">
    <property type="entry name" value="Ribosome-recycling factor"/>
    <property type="match status" value="1"/>
</dbReference>
<dbReference type="Gene3D" id="3.30.1360.40">
    <property type="match status" value="1"/>
</dbReference>
<dbReference type="Gene3D" id="1.10.132.20">
    <property type="entry name" value="Ribosome-recycling factor"/>
    <property type="match status" value="1"/>
</dbReference>
<dbReference type="HAMAP" id="MF_00040">
    <property type="entry name" value="RRF"/>
    <property type="match status" value="1"/>
</dbReference>
<dbReference type="InterPro" id="IPR002661">
    <property type="entry name" value="Ribosome_recyc_fac"/>
</dbReference>
<dbReference type="InterPro" id="IPR023584">
    <property type="entry name" value="Ribosome_recyc_fac_dom"/>
</dbReference>
<dbReference type="InterPro" id="IPR036191">
    <property type="entry name" value="RRF_sf"/>
</dbReference>
<dbReference type="NCBIfam" id="TIGR00496">
    <property type="entry name" value="frr"/>
    <property type="match status" value="1"/>
</dbReference>
<dbReference type="PANTHER" id="PTHR20982:SF3">
    <property type="entry name" value="MITOCHONDRIAL RIBOSOME RECYCLING FACTOR PSEUDO 1"/>
    <property type="match status" value="1"/>
</dbReference>
<dbReference type="PANTHER" id="PTHR20982">
    <property type="entry name" value="RIBOSOME RECYCLING FACTOR"/>
    <property type="match status" value="1"/>
</dbReference>
<dbReference type="Pfam" id="PF01765">
    <property type="entry name" value="RRF"/>
    <property type="match status" value="1"/>
</dbReference>
<dbReference type="SUPFAM" id="SSF55194">
    <property type="entry name" value="Ribosome recycling factor, RRF"/>
    <property type="match status" value="1"/>
</dbReference>
<reference key="1">
    <citation type="journal article" date="2005" name="J. Bacteriol.">
        <title>Whole-genome sequencing of Staphylococcus haemolyticus uncovers the extreme plasticity of its genome and the evolution of human-colonizing staphylococcal species.</title>
        <authorList>
            <person name="Takeuchi F."/>
            <person name="Watanabe S."/>
            <person name="Baba T."/>
            <person name="Yuzawa H."/>
            <person name="Ito T."/>
            <person name="Morimoto Y."/>
            <person name="Kuroda M."/>
            <person name="Cui L."/>
            <person name="Takahashi M."/>
            <person name="Ankai A."/>
            <person name="Baba S."/>
            <person name="Fukui S."/>
            <person name="Lee J.C."/>
            <person name="Hiramatsu K."/>
        </authorList>
    </citation>
    <scope>NUCLEOTIDE SEQUENCE [LARGE SCALE GENOMIC DNA]</scope>
    <source>
        <strain>JCSC1435</strain>
    </source>
</reference>
<evidence type="ECO:0000255" key="1">
    <source>
        <dbReference type="HAMAP-Rule" id="MF_00040"/>
    </source>
</evidence>
<evidence type="ECO:0000256" key="2">
    <source>
        <dbReference type="SAM" id="MobiDB-lite"/>
    </source>
</evidence>
<proteinExistence type="inferred from homology"/>
<keyword id="KW-0963">Cytoplasm</keyword>
<keyword id="KW-0648">Protein biosynthesis</keyword>
<gene>
    <name evidence="1" type="primary">frr</name>
    <name type="ordered locus">SH1655</name>
</gene>
<sequence length="184" mass="20369">MSDIIQDTKARMSKSIDNLSRELANISAGRANSNLLSGVTVDYYGAPTPVQQLASINVPEARLLVISPYDKSSVADIEKAIYAANLGVNPTSDGEVIRITVPALTEERRKELVKNVKKIGEDAKVSIRNIRRDINDQLKKDEKNGDITEDDLRSQTEDVQKATDNSIKEIDQLVEDKEKDIMSV</sequence>
<accession>Q4L5W1</accession>
<protein>
    <recommendedName>
        <fullName evidence="1">Ribosome-recycling factor</fullName>
        <shortName evidence="1">RRF</shortName>
    </recommendedName>
    <alternativeName>
        <fullName evidence="1">Ribosome-releasing factor</fullName>
    </alternativeName>
</protein>
<comment type="function">
    <text evidence="1">Responsible for the release of ribosomes from messenger RNA at the termination of protein biosynthesis. May increase the efficiency of translation by recycling ribosomes from one round of translation to another.</text>
</comment>
<comment type="subcellular location">
    <subcellularLocation>
        <location evidence="1">Cytoplasm</location>
    </subcellularLocation>
</comment>
<comment type="similarity">
    <text evidence="1">Belongs to the RRF family.</text>
</comment>
<organism>
    <name type="scientific">Staphylococcus haemolyticus (strain JCSC1435)</name>
    <dbReference type="NCBI Taxonomy" id="279808"/>
    <lineage>
        <taxon>Bacteria</taxon>
        <taxon>Bacillati</taxon>
        <taxon>Bacillota</taxon>
        <taxon>Bacilli</taxon>
        <taxon>Bacillales</taxon>
        <taxon>Staphylococcaceae</taxon>
        <taxon>Staphylococcus</taxon>
    </lineage>
</organism>
<name>RRF_STAHJ</name>
<feature type="chain" id="PRO_1000003279" description="Ribosome-recycling factor">
    <location>
        <begin position="1"/>
        <end position="184"/>
    </location>
</feature>
<feature type="region of interest" description="Disordered" evidence="2">
    <location>
        <begin position="141"/>
        <end position="164"/>
    </location>
</feature>